<comment type="function">
    <text evidence="1">Catalyzes the attachment of proline to tRNA(Pro) in a two-step reaction: proline is first activated by ATP to form Pro-AMP and then transferred to the acceptor end of tRNA(Pro).</text>
</comment>
<comment type="catalytic activity">
    <reaction evidence="1">
        <text>tRNA(Pro) + L-proline + ATP = L-prolyl-tRNA(Pro) + AMP + diphosphate</text>
        <dbReference type="Rhea" id="RHEA:14305"/>
        <dbReference type="Rhea" id="RHEA-COMP:9700"/>
        <dbReference type="Rhea" id="RHEA-COMP:9702"/>
        <dbReference type="ChEBI" id="CHEBI:30616"/>
        <dbReference type="ChEBI" id="CHEBI:33019"/>
        <dbReference type="ChEBI" id="CHEBI:60039"/>
        <dbReference type="ChEBI" id="CHEBI:78442"/>
        <dbReference type="ChEBI" id="CHEBI:78532"/>
        <dbReference type="ChEBI" id="CHEBI:456215"/>
        <dbReference type="EC" id="6.1.1.15"/>
    </reaction>
</comment>
<comment type="subunit">
    <text evidence="1">Homodimer.</text>
</comment>
<comment type="subcellular location">
    <subcellularLocation>
        <location evidence="1">Cytoplasm</location>
    </subcellularLocation>
</comment>
<comment type="domain">
    <text evidence="1">Consists of three domains: the N-terminal catalytic domain, the anticodon-binding domain and the C-terminal extension.</text>
</comment>
<comment type="similarity">
    <text evidence="1">Belongs to the class-II aminoacyl-tRNA synthetase family. ProS type 3 subfamily.</text>
</comment>
<proteinExistence type="inferred from homology"/>
<gene>
    <name evidence="1" type="primary">proS</name>
    <name type="ordered locus">Pars_0803</name>
</gene>
<feature type="chain" id="PRO_1000069194" description="Proline--tRNA ligase">
    <location>
        <begin position="1"/>
        <end position="488"/>
    </location>
</feature>
<evidence type="ECO:0000255" key="1">
    <source>
        <dbReference type="HAMAP-Rule" id="MF_01571"/>
    </source>
</evidence>
<accession>A4WJ22</accession>
<sequence>MELIREARPHGREKLRANLIEWFHWLLREAELYDVRYPVKGAYVWRPYGMRLRRHVEELIRRSHDETGHQEVLFPVFIPYEFFGKESQHIRGFEKEVFWVSKGGEEGERLVLRPTSETAIMPMVKLWVHDYKDLPLRLYQIVSVFRAETKMTHPMIRLREISMFKEAHTVHVDREDAERQVREAVEIYKKIFDEMCLAYMINKRPDWDKFAGAEYTIAFDTVLPDGRTLQIGTVHYLGTNFTRVFEVTYLAADGTRRLAHTTSYGISERSIAAMLITHGDDAGTVLPPRLAPIQVVIVPIFYGEEEAASVISYAREVEKALREAGMRVHIDDRPDKTPGWKFYFWELKGVPLRVEVGKRDLEKRQVVITRRDTLEKYAVGLGELVDAVRGLMRTVEENLRRRAWEELRSRIVRAETVEAAKAAIREGKVVEVPWSGDNDCGIKLKDLVGADALGVPLDSDASVGGFDLRDLACGEKRAEFWLRLSERY</sequence>
<keyword id="KW-0030">Aminoacyl-tRNA synthetase</keyword>
<keyword id="KW-0067">ATP-binding</keyword>
<keyword id="KW-0963">Cytoplasm</keyword>
<keyword id="KW-0436">Ligase</keyword>
<keyword id="KW-0547">Nucleotide-binding</keyword>
<keyword id="KW-0648">Protein biosynthesis</keyword>
<organism>
    <name type="scientific">Pyrobaculum arsenaticum (strain DSM 13514 / JCM 11321 / PZ6)</name>
    <dbReference type="NCBI Taxonomy" id="340102"/>
    <lineage>
        <taxon>Archaea</taxon>
        <taxon>Thermoproteota</taxon>
        <taxon>Thermoprotei</taxon>
        <taxon>Thermoproteales</taxon>
        <taxon>Thermoproteaceae</taxon>
        <taxon>Pyrobaculum</taxon>
    </lineage>
</organism>
<protein>
    <recommendedName>
        <fullName evidence="1">Proline--tRNA ligase</fullName>
        <ecNumber evidence="1">6.1.1.15</ecNumber>
    </recommendedName>
    <alternativeName>
        <fullName evidence="1">Prolyl-tRNA synthetase</fullName>
        <shortName evidence="1">ProRS</shortName>
    </alternativeName>
</protein>
<dbReference type="EC" id="6.1.1.15" evidence="1"/>
<dbReference type="EMBL" id="CP000660">
    <property type="protein sequence ID" value="ABP50389.1"/>
    <property type="molecule type" value="Genomic_DNA"/>
</dbReference>
<dbReference type="SMR" id="A4WJ22"/>
<dbReference type="STRING" id="340102.Pars_0803"/>
<dbReference type="KEGG" id="pas:Pars_0803"/>
<dbReference type="HOGENOM" id="CLU_001882_4_2_2"/>
<dbReference type="OrthoDB" id="7375at2157"/>
<dbReference type="PhylomeDB" id="A4WJ22"/>
<dbReference type="Proteomes" id="UP000001567">
    <property type="component" value="Chromosome"/>
</dbReference>
<dbReference type="GO" id="GO:0017101">
    <property type="term" value="C:aminoacyl-tRNA synthetase multienzyme complex"/>
    <property type="evidence" value="ECO:0007669"/>
    <property type="project" value="TreeGrafter"/>
</dbReference>
<dbReference type="GO" id="GO:0005737">
    <property type="term" value="C:cytoplasm"/>
    <property type="evidence" value="ECO:0007669"/>
    <property type="project" value="UniProtKB-SubCell"/>
</dbReference>
<dbReference type="GO" id="GO:0005524">
    <property type="term" value="F:ATP binding"/>
    <property type="evidence" value="ECO:0007669"/>
    <property type="project" value="UniProtKB-UniRule"/>
</dbReference>
<dbReference type="GO" id="GO:0004827">
    <property type="term" value="F:proline-tRNA ligase activity"/>
    <property type="evidence" value="ECO:0007669"/>
    <property type="project" value="UniProtKB-UniRule"/>
</dbReference>
<dbReference type="GO" id="GO:0006433">
    <property type="term" value="P:prolyl-tRNA aminoacylation"/>
    <property type="evidence" value="ECO:0007669"/>
    <property type="project" value="UniProtKB-UniRule"/>
</dbReference>
<dbReference type="CDD" id="cd00862">
    <property type="entry name" value="ProRS_anticodon_zinc"/>
    <property type="match status" value="1"/>
</dbReference>
<dbReference type="FunFam" id="3.40.50.800:FF:000005">
    <property type="entry name" value="bifunctional glutamate/proline--tRNA ligase"/>
    <property type="match status" value="1"/>
</dbReference>
<dbReference type="FunFam" id="3.30.930.10:FF:000037">
    <property type="entry name" value="Proline--tRNA ligase"/>
    <property type="match status" value="1"/>
</dbReference>
<dbReference type="Gene3D" id="3.40.50.800">
    <property type="entry name" value="Anticodon-binding domain"/>
    <property type="match status" value="1"/>
</dbReference>
<dbReference type="Gene3D" id="3.30.930.10">
    <property type="entry name" value="Bira Bifunctional Protein, Domain 2"/>
    <property type="match status" value="1"/>
</dbReference>
<dbReference type="Gene3D" id="3.30.110.30">
    <property type="entry name" value="C-terminal domain of ProRS"/>
    <property type="match status" value="1"/>
</dbReference>
<dbReference type="HAMAP" id="MF_01571">
    <property type="entry name" value="Pro_tRNA_synth_type3"/>
    <property type="match status" value="1"/>
</dbReference>
<dbReference type="InterPro" id="IPR002314">
    <property type="entry name" value="aa-tRNA-synt_IIb"/>
</dbReference>
<dbReference type="InterPro" id="IPR006195">
    <property type="entry name" value="aa-tRNA-synth_II"/>
</dbReference>
<dbReference type="InterPro" id="IPR045864">
    <property type="entry name" value="aa-tRNA-synth_II/BPL/LPL"/>
</dbReference>
<dbReference type="InterPro" id="IPR004154">
    <property type="entry name" value="Anticodon-bd"/>
</dbReference>
<dbReference type="InterPro" id="IPR036621">
    <property type="entry name" value="Anticodon-bd_dom_sf"/>
</dbReference>
<dbReference type="InterPro" id="IPR002316">
    <property type="entry name" value="Pro-tRNA-ligase_IIa"/>
</dbReference>
<dbReference type="InterPro" id="IPR004499">
    <property type="entry name" value="Pro-tRNA-ligase_IIa_arc-type"/>
</dbReference>
<dbReference type="InterPro" id="IPR016061">
    <property type="entry name" value="Pro-tRNA_ligase_II_C"/>
</dbReference>
<dbReference type="InterPro" id="IPR017449">
    <property type="entry name" value="Pro-tRNA_synth_II"/>
</dbReference>
<dbReference type="NCBIfam" id="TIGR00408">
    <property type="entry name" value="proS_fam_I"/>
    <property type="match status" value="1"/>
</dbReference>
<dbReference type="PANTHER" id="PTHR43382:SF2">
    <property type="entry name" value="BIFUNCTIONAL GLUTAMATE_PROLINE--TRNA LIGASE"/>
    <property type="match status" value="1"/>
</dbReference>
<dbReference type="PANTHER" id="PTHR43382">
    <property type="entry name" value="PROLYL-TRNA SYNTHETASE"/>
    <property type="match status" value="1"/>
</dbReference>
<dbReference type="Pfam" id="PF03129">
    <property type="entry name" value="HGTP_anticodon"/>
    <property type="match status" value="1"/>
</dbReference>
<dbReference type="Pfam" id="PF09180">
    <property type="entry name" value="ProRS-C_1"/>
    <property type="match status" value="1"/>
</dbReference>
<dbReference type="Pfam" id="PF00587">
    <property type="entry name" value="tRNA-synt_2b"/>
    <property type="match status" value="1"/>
</dbReference>
<dbReference type="PRINTS" id="PR01046">
    <property type="entry name" value="TRNASYNTHPRO"/>
</dbReference>
<dbReference type="SMART" id="SM00946">
    <property type="entry name" value="ProRS-C_1"/>
    <property type="match status" value="1"/>
</dbReference>
<dbReference type="SUPFAM" id="SSF64586">
    <property type="entry name" value="C-terminal domain of ProRS"/>
    <property type="match status" value="1"/>
</dbReference>
<dbReference type="SUPFAM" id="SSF52954">
    <property type="entry name" value="Class II aaRS ABD-related"/>
    <property type="match status" value="1"/>
</dbReference>
<dbReference type="SUPFAM" id="SSF55681">
    <property type="entry name" value="Class II aaRS and biotin synthetases"/>
    <property type="match status" value="1"/>
</dbReference>
<dbReference type="PROSITE" id="PS50862">
    <property type="entry name" value="AA_TRNA_LIGASE_II"/>
    <property type="match status" value="1"/>
</dbReference>
<name>SYP_PYRAR</name>
<reference key="1">
    <citation type="submission" date="2007-04" db="EMBL/GenBank/DDBJ databases">
        <title>Complete sequence of Pyrobaculum arsenaticum DSM 13514.</title>
        <authorList>
            <consortium name="US DOE Joint Genome Institute"/>
            <person name="Copeland A."/>
            <person name="Lucas S."/>
            <person name="Lapidus A."/>
            <person name="Barry K."/>
            <person name="Glavina del Rio T."/>
            <person name="Dalin E."/>
            <person name="Tice H."/>
            <person name="Pitluck S."/>
            <person name="Chain P."/>
            <person name="Malfatti S."/>
            <person name="Shin M."/>
            <person name="Vergez L."/>
            <person name="Schmutz J."/>
            <person name="Larimer F."/>
            <person name="Land M."/>
            <person name="Hauser L."/>
            <person name="Kyrpides N."/>
            <person name="Mikhailova N."/>
            <person name="Cozen A.E."/>
            <person name="Fitz-Gibbon S.T."/>
            <person name="House C.H."/>
            <person name="Saltikov C."/>
            <person name="Lowe T.M."/>
            <person name="Richardson P."/>
        </authorList>
    </citation>
    <scope>NUCLEOTIDE SEQUENCE [LARGE SCALE GENOMIC DNA]</scope>
    <source>
        <strain>ATCC 700994 / DSM 13514 / JCM 11321 / PZ6</strain>
    </source>
</reference>